<evidence type="ECO:0000255" key="1">
    <source>
        <dbReference type="HAMAP-Rule" id="MF_00074"/>
    </source>
</evidence>
<protein>
    <recommendedName>
        <fullName evidence="1">Ribosomal RNA small subunit methyltransferase G</fullName>
        <ecNumber evidence="1">2.1.1.170</ecNumber>
    </recommendedName>
    <alternativeName>
        <fullName evidence="1">16S rRNA 7-methylguanosine methyltransferase</fullName>
        <shortName evidence="1">16S rRNA m7G methyltransferase</shortName>
    </alternativeName>
</protein>
<accession>A4J072</accession>
<keyword id="KW-0963">Cytoplasm</keyword>
<keyword id="KW-0489">Methyltransferase</keyword>
<keyword id="KW-0698">rRNA processing</keyword>
<keyword id="KW-0949">S-adenosyl-L-methionine</keyword>
<keyword id="KW-0808">Transferase</keyword>
<sequence length="205" mass="23582">MDIMKDKIRQALSELDILATEVQIDQWLDYLKLLEKWNKVYNMTAIKNIDEMLVKHLFDSLAVAKYIKGDSTVDVGTGGGLPGVVLAILYPQHQFTLVDSVGKKIMFLKNVKKSLSLNNINPLNTRIENLEGNFDNIISRAFSSVDTFYELCKHFLTEHNQMLAMKGRDLEERNLESLHLNIEKYSIKVPFLNAERNLIVIRKKL</sequence>
<organism>
    <name type="scientific">Francisella tularensis subsp. tularensis (strain WY96-3418)</name>
    <dbReference type="NCBI Taxonomy" id="418136"/>
    <lineage>
        <taxon>Bacteria</taxon>
        <taxon>Pseudomonadati</taxon>
        <taxon>Pseudomonadota</taxon>
        <taxon>Gammaproteobacteria</taxon>
        <taxon>Thiotrichales</taxon>
        <taxon>Francisellaceae</taxon>
        <taxon>Francisella</taxon>
    </lineage>
</organism>
<comment type="function">
    <text evidence="1">Specifically methylates the N7 position of guanine in position 527 of 16S rRNA.</text>
</comment>
<comment type="catalytic activity">
    <reaction evidence="1">
        <text>guanosine(527) in 16S rRNA + S-adenosyl-L-methionine = N(7)-methylguanosine(527) in 16S rRNA + S-adenosyl-L-homocysteine</text>
        <dbReference type="Rhea" id="RHEA:42732"/>
        <dbReference type="Rhea" id="RHEA-COMP:10209"/>
        <dbReference type="Rhea" id="RHEA-COMP:10210"/>
        <dbReference type="ChEBI" id="CHEBI:57856"/>
        <dbReference type="ChEBI" id="CHEBI:59789"/>
        <dbReference type="ChEBI" id="CHEBI:74269"/>
        <dbReference type="ChEBI" id="CHEBI:74480"/>
        <dbReference type="EC" id="2.1.1.170"/>
    </reaction>
</comment>
<comment type="subcellular location">
    <subcellularLocation>
        <location evidence="1">Cytoplasm</location>
    </subcellularLocation>
</comment>
<comment type="similarity">
    <text evidence="1">Belongs to the methyltransferase superfamily. RNA methyltransferase RsmG family.</text>
</comment>
<gene>
    <name evidence="1" type="primary">rsmG</name>
    <name type="ordered locus">FTW_1928</name>
</gene>
<dbReference type="EC" id="2.1.1.170" evidence="1"/>
<dbReference type="EMBL" id="CP000608">
    <property type="protein sequence ID" value="ABO47574.1"/>
    <property type="molecule type" value="Genomic_DNA"/>
</dbReference>
<dbReference type="RefSeq" id="WP_003027470.1">
    <property type="nucleotide sequence ID" value="NC_009257.1"/>
</dbReference>
<dbReference type="SMR" id="A4J072"/>
<dbReference type="KEGG" id="ftw:FTW_1928"/>
<dbReference type="HOGENOM" id="CLU_065341_2_2_6"/>
<dbReference type="GO" id="GO:0005829">
    <property type="term" value="C:cytosol"/>
    <property type="evidence" value="ECO:0007669"/>
    <property type="project" value="TreeGrafter"/>
</dbReference>
<dbReference type="GO" id="GO:0070043">
    <property type="term" value="F:rRNA (guanine-N7-)-methyltransferase activity"/>
    <property type="evidence" value="ECO:0007669"/>
    <property type="project" value="UniProtKB-UniRule"/>
</dbReference>
<dbReference type="Gene3D" id="3.40.50.150">
    <property type="entry name" value="Vaccinia Virus protein VP39"/>
    <property type="match status" value="1"/>
</dbReference>
<dbReference type="HAMAP" id="MF_00074">
    <property type="entry name" value="16SrRNA_methyltr_G"/>
    <property type="match status" value="1"/>
</dbReference>
<dbReference type="InterPro" id="IPR003682">
    <property type="entry name" value="rRNA_ssu_MeTfrase_G"/>
</dbReference>
<dbReference type="InterPro" id="IPR029063">
    <property type="entry name" value="SAM-dependent_MTases_sf"/>
</dbReference>
<dbReference type="NCBIfam" id="TIGR00138">
    <property type="entry name" value="rsmG_gidB"/>
    <property type="match status" value="1"/>
</dbReference>
<dbReference type="PANTHER" id="PTHR31760">
    <property type="entry name" value="S-ADENOSYL-L-METHIONINE-DEPENDENT METHYLTRANSFERASES SUPERFAMILY PROTEIN"/>
    <property type="match status" value="1"/>
</dbReference>
<dbReference type="PANTHER" id="PTHR31760:SF0">
    <property type="entry name" value="S-ADENOSYL-L-METHIONINE-DEPENDENT METHYLTRANSFERASES SUPERFAMILY PROTEIN"/>
    <property type="match status" value="1"/>
</dbReference>
<dbReference type="Pfam" id="PF02527">
    <property type="entry name" value="GidB"/>
    <property type="match status" value="1"/>
</dbReference>
<dbReference type="PIRSF" id="PIRSF003078">
    <property type="entry name" value="GidB"/>
    <property type="match status" value="1"/>
</dbReference>
<dbReference type="SUPFAM" id="SSF53335">
    <property type="entry name" value="S-adenosyl-L-methionine-dependent methyltransferases"/>
    <property type="match status" value="1"/>
</dbReference>
<reference key="1">
    <citation type="journal article" date="2007" name="PLoS ONE">
        <title>Complete genomic characterization of a pathogenic A.II strain of Francisella tularensis subspecies tularensis.</title>
        <authorList>
            <person name="Beckstrom-Sternberg S.M."/>
            <person name="Auerbach R.K."/>
            <person name="Godbole S."/>
            <person name="Pearson J.V."/>
            <person name="Beckstrom-Sternberg J.S."/>
            <person name="Deng Z."/>
            <person name="Munk C."/>
            <person name="Kubota K."/>
            <person name="Zhou Y."/>
            <person name="Bruce D."/>
            <person name="Noronha J."/>
            <person name="Scheuermann R.H."/>
            <person name="Wang A."/>
            <person name="Wei X."/>
            <person name="Wang J."/>
            <person name="Hao J."/>
            <person name="Wagner D.M."/>
            <person name="Brettin T.S."/>
            <person name="Brown N."/>
            <person name="Gilna P."/>
            <person name="Keim P.S."/>
        </authorList>
    </citation>
    <scope>NUCLEOTIDE SEQUENCE [LARGE SCALE GENOMIC DNA]</scope>
    <source>
        <strain>WY96-3418</strain>
    </source>
</reference>
<proteinExistence type="inferred from homology"/>
<name>RSMG_FRATW</name>
<feature type="chain" id="PRO_1000010150" description="Ribosomal RNA small subunit methyltransferase G">
    <location>
        <begin position="1"/>
        <end position="205"/>
    </location>
</feature>
<feature type="binding site" evidence="1">
    <location>
        <position position="76"/>
    </location>
    <ligand>
        <name>S-adenosyl-L-methionine</name>
        <dbReference type="ChEBI" id="CHEBI:59789"/>
    </ligand>
</feature>
<feature type="binding site" evidence="1">
    <location>
        <position position="81"/>
    </location>
    <ligand>
        <name>S-adenosyl-L-methionine</name>
        <dbReference type="ChEBI" id="CHEBI:59789"/>
    </ligand>
</feature>
<feature type="binding site" evidence="1">
    <location>
        <begin position="127"/>
        <end position="128"/>
    </location>
    <ligand>
        <name>S-adenosyl-L-methionine</name>
        <dbReference type="ChEBI" id="CHEBI:59789"/>
    </ligand>
</feature>
<feature type="binding site" evidence="1">
    <location>
        <position position="140"/>
    </location>
    <ligand>
        <name>S-adenosyl-L-methionine</name>
        <dbReference type="ChEBI" id="CHEBI:59789"/>
    </ligand>
</feature>